<evidence type="ECO:0000255" key="1">
    <source>
        <dbReference type="HAMAP-Rule" id="MF_00379"/>
    </source>
</evidence>
<keyword id="KW-0963">Cytoplasm</keyword>
<keyword id="KW-0342">GTP-binding</keyword>
<keyword id="KW-0378">Hydrolase</keyword>
<keyword id="KW-0460">Magnesium</keyword>
<keyword id="KW-0479">Metal-binding</keyword>
<keyword id="KW-0547">Nucleotide-binding</keyword>
<keyword id="KW-0630">Potassium</keyword>
<keyword id="KW-0819">tRNA processing</keyword>
<name>MNME_PSEAB</name>
<organism>
    <name type="scientific">Pseudomonas aeruginosa (strain UCBPP-PA14)</name>
    <dbReference type="NCBI Taxonomy" id="208963"/>
    <lineage>
        <taxon>Bacteria</taxon>
        <taxon>Pseudomonadati</taxon>
        <taxon>Pseudomonadota</taxon>
        <taxon>Gammaproteobacteria</taxon>
        <taxon>Pseudomonadales</taxon>
        <taxon>Pseudomonadaceae</taxon>
        <taxon>Pseudomonas</taxon>
    </lineage>
</organism>
<proteinExistence type="inferred from homology"/>
<dbReference type="EC" id="3.6.-.-" evidence="1"/>
<dbReference type="EMBL" id="CP000438">
    <property type="protein sequence ID" value="ABJ14954.1"/>
    <property type="molecule type" value="Genomic_DNA"/>
</dbReference>
<dbReference type="RefSeq" id="WP_003142192.1">
    <property type="nucleotide sequence ID" value="NZ_CP034244.1"/>
</dbReference>
<dbReference type="SMR" id="Q02DE1"/>
<dbReference type="KEGG" id="pau:PA14_73400"/>
<dbReference type="PseudoCAP" id="PA14_73400"/>
<dbReference type="HOGENOM" id="CLU_019624_4_1_6"/>
<dbReference type="BioCyc" id="PAER208963:G1G74-6176-MONOMER"/>
<dbReference type="Proteomes" id="UP000000653">
    <property type="component" value="Chromosome"/>
</dbReference>
<dbReference type="GO" id="GO:0005829">
    <property type="term" value="C:cytosol"/>
    <property type="evidence" value="ECO:0007669"/>
    <property type="project" value="TreeGrafter"/>
</dbReference>
<dbReference type="GO" id="GO:0005525">
    <property type="term" value="F:GTP binding"/>
    <property type="evidence" value="ECO:0007669"/>
    <property type="project" value="UniProtKB-UniRule"/>
</dbReference>
<dbReference type="GO" id="GO:0003924">
    <property type="term" value="F:GTPase activity"/>
    <property type="evidence" value="ECO:0007669"/>
    <property type="project" value="UniProtKB-UniRule"/>
</dbReference>
<dbReference type="GO" id="GO:0046872">
    <property type="term" value="F:metal ion binding"/>
    <property type="evidence" value="ECO:0007669"/>
    <property type="project" value="UniProtKB-KW"/>
</dbReference>
<dbReference type="GO" id="GO:0030488">
    <property type="term" value="P:tRNA methylation"/>
    <property type="evidence" value="ECO:0007669"/>
    <property type="project" value="TreeGrafter"/>
</dbReference>
<dbReference type="GO" id="GO:0002098">
    <property type="term" value="P:tRNA wobble uridine modification"/>
    <property type="evidence" value="ECO:0007669"/>
    <property type="project" value="TreeGrafter"/>
</dbReference>
<dbReference type="CDD" id="cd04164">
    <property type="entry name" value="trmE"/>
    <property type="match status" value="1"/>
</dbReference>
<dbReference type="CDD" id="cd14858">
    <property type="entry name" value="TrmE_N"/>
    <property type="match status" value="1"/>
</dbReference>
<dbReference type="FunFam" id="3.30.1360.120:FF:000001">
    <property type="entry name" value="tRNA modification GTPase MnmE"/>
    <property type="match status" value="1"/>
</dbReference>
<dbReference type="FunFam" id="3.40.50.300:FF:000249">
    <property type="entry name" value="tRNA modification GTPase MnmE"/>
    <property type="match status" value="1"/>
</dbReference>
<dbReference type="Gene3D" id="3.40.50.300">
    <property type="entry name" value="P-loop containing nucleotide triphosphate hydrolases"/>
    <property type="match status" value="1"/>
</dbReference>
<dbReference type="Gene3D" id="3.30.1360.120">
    <property type="entry name" value="Probable tRNA modification gtpase trme, domain 1"/>
    <property type="match status" value="1"/>
</dbReference>
<dbReference type="Gene3D" id="1.20.120.430">
    <property type="entry name" value="tRNA modification GTPase MnmE domain 2"/>
    <property type="match status" value="1"/>
</dbReference>
<dbReference type="HAMAP" id="MF_00379">
    <property type="entry name" value="GTPase_MnmE"/>
    <property type="match status" value="1"/>
</dbReference>
<dbReference type="InterPro" id="IPR031168">
    <property type="entry name" value="G_TrmE"/>
</dbReference>
<dbReference type="InterPro" id="IPR006073">
    <property type="entry name" value="GTP-bd"/>
</dbReference>
<dbReference type="InterPro" id="IPR018948">
    <property type="entry name" value="GTP-bd_TrmE_N"/>
</dbReference>
<dbReference type="InterPro" id="IPR004520">
    <property type="entry name" value="GTPase_MnmE"/>
</dbReference>
<dbReference type="InterPro" id="IPR027368">
    <property type="entry name" value="MnmE_dom2"/>
</dbReference>
<dbReference type="InterPro" id="IPR025867">
    <property type="entry name" value="MnmE_helical"/>
</dbReference>
<dbReference type="InterPro" id="IPR027417">
    <property type="entry name" value="P-loop_NTPase"/>
</dbReference>
<dbReference type="InterPro" id="IPR005225">
    <property type="entry name" value="Small_GTP-bd"/>
</dbReference>
<dbReference type="InterPro" id="IPR027266">
    <property type="entry name" value="TrmE/GcvT_dom1"/>
</dbReference>
<dbReference type="NCBIfam" id="TIGR00450">
    <property type="entry name" value="mnmE_trmE_thdF"/>
    <property type="match status" value="1"/>
</dbReference>
<dbReference type="NCBIfam" id="NF003661">
    <property type="entry name" value="PRK05291.1-3"/>
    <property type="match status" value="1"/>
</dbReference>
<dbReference type="NCBIfam" id="TIGR00231">
    <property type="entry name" value="small_GTP"/>
    <property type="match status" value="1"/>
</dbReference>
<dbReference type="PANTHER" id="PTHR42714">
    <property type="entry name" value="TRNA MODIFICATION GTPASE GTPBP3"/>
    <property type="match status" value="1"/>
</dbReference>
<dbReference type="PANTHER" id="PTHR42714:SF2">
    <property type="entry name" value="TRNA MODIFICATION GTPASE GTPBP3, MITOCHONDRIAL"/>
    <property type="match status" value="1"/>
</dbReference>
<dbReference type="Pfam" id="PF01926">
    <property type="entry name" value="MMR_HSR1"/>
    <property type="match status" value="1"/>
</dbReference>
<dbReference type="Pfam" id="PF12631">
    <property type="entry name" value="MnmE_helical"/>
    <property type="match status" value="1"/>
</dbReference>
<dbReference type="Pfam" id="PF10396">
    <property type="entry name" value="TrmE_N"/>
    <property type="match status" value="1"/>
</dbReference>
<dbReference type="PRINTS" id="PR00326">
    <property type="entry name" value="GTP1OBG"/>
</dbReference>
<dbReference type="SUPFAM" id="SSF52540">
    <property type="entry name" value="P-loop containing nucleoside triphosphate hydrolases"/>
    <property type="match status" value="1"/>
</dbReference>
<dbReference type="SUPFAM" id="SSF116878">
    <property type="entry name" value="TrmE connector domain"/>
    <property type="match status" value="1"/>
</dbReference>
<dbReference type="PROSITE" id="PS51709">
    <property type="entry name" value="G_TRME"/>
    <property type="match status" value="1"/>
</dbReference>
<reference key="1">
    <citation type="journal article" date="2006" name="Genome Biol.">
        <title>Genomic analysis reveals that Pseudomonas aeruginosa virulence is combinatorial.</title>
        <authorList>
            <person name="Lee D.G."/>
            <person name="Urbach J.M."/>
            <person name="Wu G."/>
            <person name="Liberati N.T."/>
            <person name="Feinbaum R.L."/>
            <person name="Miyata S."/>
            <person name="Diggins L.T."/>
            <person name="He J."/>
            <person name="Saucier M."/>
            <person name="Deziel E."/>
            <person name="Friedman L."/>
            <person name="Li L."/>
            <person name="Grills G."/>
            <person name="Montgomery K."/>
            <person name="Kucherlapati R."/>
            <person name="Rahme L.G."/>
            <person name="Ausubel F.M."/>
        </authorList>
    </citation>
    <scope>NUCLEOTIDE SEQUENCE [LARGE SCALE GENOMIC DNA]</scope>
    <source>
        <strain>UCBPP-PA14</strain>
    </source>
</reference>
<feature type="chain" id="PRO_1000048854" description="tRNA modification GTPase MnmE">
    <location>
        <begin position="1"/>
        <end position="455"/>
    </location>
</feature>
<feature type="domain" description="TrmE-type G">
    <location>
        <begin position="216"/>
        <end position="378"/>
    </location>
</feature>
<feature type="binding site" evidence="1">
    <location>
        <position position="24"/>
    </location>
    <ligand>
        <name>(6S)-5-formyl-5,6,7,8-tetrahydrofolate</name>
        <dbReference type="ChEBI" id="CHEBI:57457"/>
    </ligand>
</feature>
<feature type="binding site" evidence="1">
    <location>
        <position position="81"/>
    </location>
    <ligand>
        <name>(6S)-5-formyl-5,6,7,8-tetrahydrofolate</name>
        <dbReference type="ChEBI" id="CHEBI:57457"/>
    </ligand>
</feature>
<feature type="binding site" evidence="1">
    <location>
        <position position="120"/>
    </location>
    <ligand>
        <name>(6S)-5-formyl-5,6,7,8-tetrahydrofolate</name>
        <dbReference type="ChEBI" id="CHEBI:57457"/>
    </ligand>
</feature>
<feature type="binding site" evidence="1">
    <location>
        <begin position="226"/>
        <end position="231"/>
    </location>
    <ligand>
        <name>GTP</name>
        <dbReference type="ChEBI" id="CHEBI:37565"/>
    </ligand>
</feature>
<feature type="binding site" evidence="1">
    <location>
        <position position="226"/>
    </location>
    <ligand>
        <name>K(+)</name>
        <dbReference type="ChEBI" id="CHEBI:29103"/>
    </ligand>
</feature>
<feature type="binding site" evidence="1">
    <location>
        <position position="230"/>
    </location>
    <ligand>
        <name>Mg(2+)</name>
        <dbReference type="ChEBI" id="CHEBI:18420"/>
    </ligand>
</feature>
<feature type="binding site" evidence="1">
    <location>
        <begin position="245"/>
        <end position="251"/>
    </location>
    <ligand>
        <name>GTP</name>
        <dbReference type="ChEBI" id="CHEBI:37565"/>
    </ligand>
</feature>
<feature type="binding site" evidence="1">
    <location>
        <position position="245"/>
    </location>
    <ligand>
        <name>K(+)</name>
        <dbReference type="ChEBI" id="CHEBI:29103"/>
    </ligand>
</feature>
<feature type="binding site" evidence="1">
    <location>
        <position position="247"/>
    </location>
    <ligand>
        <name>K(+)</name>
        <dbReference type="ChEBI" id="CHEBI:29103"/>
    </ligand>
</feature>
<feature type="binding site" evidence="1">
    <location>
        <position position="250"/>
    </location>
    <ligand>
        <name>K(+)</name>
        <dbReference type="ChEBI" id="CHEBI:29103"/>
    </ligand>
</feature>
<feature type="binding site" evidence="1">
    <location>
        <position position="251"/>
    </location>
    <ligand>
        <name>Mg(2+)</name>
        <dbReference type="ChEBI" id="CHEBI:18420"/>
    </ligand>
</feature>
<feature type="binding site" evidence="1">
    <location>
        <begin position="270"/>
        <end position="273"/>
    </location>
    <ligand>
        <name>GTP</name>
        <dbReference type="ChEBI" id="CHEBI:37565"/>
    </ligand>
</feature>
<feature type="binding site" evidence="1">
    <location>
        <begin position="335"/>
        <end position="338"/>
    </location>
    <ligand>
        <name>GTP</name>
        <dbReference type="ChEBI" id="CHEBI:37565"/>
    </ligand>
</feature>
<feature type="binding site" evidence="1">
    <location>
        <begin position="359"/>
        <end position="361"/>
    </location>
    <ligand>
        <name>GTP</name>
        <dbReference type="ChEBI" id="CHEBI:37565"/>
    </ligand>
</feature>
<feature type="binding site" evidence="1">
    <location>
        <position position="455"/>
    </location>
    <ligand>
        <name>(6S)-5-formyl-5,6,7,8-tetrahydrofolate</name>
        <dbReference type="ChEBI" id="CHEBI:57457"/>
    </ligand>
</feature>
<sequence length="455" mass="48755">MQAATETIVAIATAQGRGGVGIVRISGPLAGQIAVAVSGRQLKARHAHYGPFLDAGGQVIDEGLSLYFPGPNSFTGEDVLELQGHGGPVVLDLLVQRCLELGARQARPGEFSERAFLNDKLDLAQAEAIADLIEASSEQAARNALRSLQGEFSRRVHALTEQLISLRIYVEAAIDFPEEEIDFLADGHVLGLLEKVRTELSTVQREASQGALLRDGMTVVIAGRPNAGKSSLLNALAGREAAIVTDIAGTTRDVLREHIHIDGMPLHVVDTAGLRDTEDHVEKIGVERALKAIGEADRVLLVVDATAPEAADPFSLWPEFLDQRPEPGKVTLIRNKADLSTESIGLEESADGHVTITLSARTGAGLELLREHLKACMGFEQTAESGFSARRRHLEALRQAGQALEHGHSQLIHNGAGELLAEDLRQAQQHLGEITGAFTPDDLLGRIFSSFCIGK</sequence>
<gene>
    <name evidence="1" type="primary">mnmE</name>
    <name evidence="1" type="synonym">trmE</name>
    <name type="ordered locus">PA14_73400</name>
</gene>
<comment type="function">
    <text evidence="1">Exhibits a very high intrinsic GTPase hydrolysis rate. Involved in the addition of a carboxymethylaminomethyl (cmnm) group at the wobble position (U34) of certain tRNAs, forming tRNA-cmnm(5)s(2)U34.</text>
</comment>
<comment type="cofactor">
    <cofactor evidence="1">
        <name>K(+)</name>
        <dbReference type="ChEBI" id="CHEBI:29103"/>
    </cofactor>
    <text evidence="1">Binds 1 potassium ion per subunit.</text>
</comment>
<comment type="subunit">
    <text evidence="1">Homodimer. Heterotetramer of two MnmE and two MnmG subunits.</text>
</comment>
<comment type="subcellular location">
    <subcellularLocation>
        <location evidence="1">Cytoplasm</location>
    </subcellularLocation>
</comment>
<comment type="similarity">
    <text evidence="1">Belongs to the TRAFAC class TrmE-Era-EngA-EngB-Septin-like GTPase superfamily. TrmE GTPase family.</text>
</comment>
<protein>
    <recommendedName>
        <fullName evidence="1">tRNA modification GTPase MnmE</fullName>
        <ecNumber evidence="1">3.6.-.-</ecNumber>
    </recommendedName>
</protein>
<accession>Q02DE1</accession>